<dbReference type="EMBL" id="AB005554">
    <property type="protein sequence ID" value="BAA21600.1"/>
    <property type="molecule type" value="Genomic_DNA"/>
</dbReference>
<dbReference type="EMBL" id="AL009126">
    <property type="protein sequence ID" value="CAB16021.1"/>
    <property type="molecule type" value="Genomic_DNA"/>
</dbReference>
<dbReference type="PIR" id="A70073">
    <property type="entry name" value="A70073"/>
</dbReference>
<dbReference type="RefSeq" id="NP_391864.1">
    <property type="nucleotide sequence ID" value="NC_000964.3"/>
</dbReference>
<dbReference type="RefSeq" id="WP_003243187.1">
    <property type="nucleotide sequence ID" value="NZ_OZ025638.1"/>
</dbReference>
<dbReference type="SMR" id="P46330"/>
<dbReference type="FunCoup" id="P46330">
    <property type="interactions" value="105"/>
</dbReference>
<dbReference type="STRING" id="224308.BSU39850"/>
<dbReference type="PaxDb" id="224308-BSU39850"/>
<dbReference type="EnsemblBacteria" id="CAB16021">
    <property type="protein sequence ID" value="CAB16021"/>
    <property type="gene ID" value="BSU_39850"/>
</dbReference>
<dbReference type="GeneID" id="937637"/>
<dbReference type="KEGG" id="bsu:BSU39850"/>
<dbReference type="PATRIC" id="fig|224308.179.peg.4311"/>
<dbReference type="eggNOG" id="COG1309">
    <property type="taxonomic scope" value="Bacteria"/>
</dbReference>
<dbReference type="InParanoid" id="P46330"/>
<dbReference type="OrthoDB" id="9810250at2"/>
<dbReference type="BioCyc" id="BSUB:BSU39850-MONOMER"/>
<dbReference type="Proteomes" id="UP000001570">
    <property type="component" value="Chromosome"/>
</dbReference>
<dbReference type="GO" id="GO:0032993">
    <property type="term" value="C:protein-DNA complex"/>
    <property type="evidence" value="ECO:0000318"/>
    <property type="project" value="GO_Central"/>
</dbReference>
<dbReference type="GO" id="GO:0003677">
    <property type="term" value="F:DNA binding"/>
    <property type="evidence" value="ECO:0007669"/>
    <property type="project" value="UniProtKB-KW"/>
</dbReference>
<dbReference type="GO" id="GO:0003700">
    <property type="term" value="F:DNA-binding transcription factor activity"/>
    <property type="evidence" value="ECO:0000318"/>
    <property type="project" value="GO_Central"/>
</dbReference>
<dbReference type="Gene3D" id="1.10.357.10">
    <property type="entry name" value="Tetracycline Repressor, domain 2"/>
    <property type="match status" value="2"/>
</dbReference>
<dbReference type="InterPro" id="IPR009057">
    <property type="entry name" value="Homeodomain-like_sf"/>
</dbReference>
<dbReference type="InterPro" id="IPR050624">
    <property type="entry name" value="HTH-type_Tx_Regulator"/>
</dbReference>
<dbReference type="InterPro" id="IPR001647">
    <property type="entry name" value="HTH_TetR"/>
</dbReference>
<dbReference type="PANTHER" id="PTHR43479">
    <property type="entry name" value="ACREF/ENVCD OPERON REPRESSOR-RELATED"/>
    <property type="match status" value="1"/>
</dbReference>
<dbReference type="PANTHER" id="PTHR43479:SF7">
    <property type="entry name" value="TETR-FAMILY TRANSCRIPTIONAL REGULATOR"/>
    <property type="match status" value="1"/>
</dbReference>
<dbReference type="Pfam" id="PF00440">
    <property type="entry name" value="TetR_N"/>
    <property type="match status" value="2"/>
</dbReference>
<dbReference type="SUPFAM" id="SSF46689">
    <property type="entry name" value="Homeodomain-like"/>
    <property type="match status" value="2"/>
</dbReference>
<dbReference type="PROSITE" id="PS50977">
    <property type="entry name" value="HTH_TETR_2"/>
    <property type="match status" value="2"/>
</dbReference>
<gene>
    <name type="primary">yxbF</name>
    <name type="synonym">E3A</name>
    <name type="synonym">yxaT</name>
    <name type="ordered locus">BSU39850</name>
</gene>
<protein>
    <recommendedName>
        <fullName>Uncharacterized HTH-type transcriptional regulator YxbF</fullName>
    </recommendedName>
</protein>
<reference key="1">
    <citation type="journal article" date="1995" name="DNA Res.">
        <title>Cloning and sequencing of a 36-kb region of the Bacillus subtilis genome between the gnt and iol operons.</title>
        <authorList>
            <person name="Yoshida K."/>
            <person name="Seki S."/>
            <person name="Fujimura M."/>
            <person name="Miwa Y."/>
            <person name="Fujita Y."/>
        </authorList>
    </citation>
    <scope>NUCLEOTIDE SEQUENCE [GENOMIC DNA]</scope>
    <source>
        <strain>168 / BGSC1A1</strain>
    </source>
</reference>
<reference key="2">
    <citation type="journal article" date="1997" name="Nature">
        <title>The complete genome sequence of the Gram-positive bacterium Bacillus subtilis.</title>
        <authorList>
            <person name="Kunst F."/>
            <person name="Ogasawara N."/>
            <person name="Moszer I."/>
            <person name="Albertini A.M."/>
            <person name="Alloni G."/>
            <person name="Azevedo V."/>
            <person name="Bertero M.G."/>
            <person name="Bessieres P."/>
            <person name="Bolotin A."/>
            <person name="Borchert S."/>
            <person name="Borriss R."/>
            <person name="Boursier L."/>
            <person name="Brans A."/>
            <person name="Braun M."/>
            <person name="Brignell S.C."/>
            <person name="Bron S."/>
            <person name="Brouillet S."/>
            <person name="Bruschi C.V."/>
            <person name="Caldwell B."/>
            <person name="Capuano V."/>
            <person name="Carter N.M."/>
            <person name="Choi S.-K."/>
            <person name="Codani J.-J."/>
            <person name="Connerton I.F."/>
            <person name="Cummings N.J."/>
            <person name="Daniel R.A."/>
            <person name="Denizot F."/>
            <person name="Devine K.M."/>
            <person name="Duesterhoeft A."/>
            <person name="Ehrlich S.D."/>
            <person name="Emmerson P.T."/>
            <person name="Entian K.-D."/>
            <person name="Errington J."/>
            <person name="Fabret C."/>
            <person name="Ferrari E."/>
            <person name="Foulger D."/>
            <person name="Fritz C."/>
            <person name="Fujita M."/>
            <person name="Fujita Y."/>
            <person name="Fuma S."/>
            <person name="Galizzi A."/>
            <person name="Galleron N."/>
            <person name="Ghim S.-Y."/>
            <person name="Glaser P."/>
            <person name="Goffeau A."/>
            <person name="Golightly E.J."/>
            <person name="Grandi G."/>
            <person name="Guiseppi G."/>
            <person name="Guy B.J."/>
            <person name="Haga K."/>
            <person name="Haiech J."/>
            <person name="Harwood C.R."/>
            <person name="Henaut A."/>
            <person name="Hilbert H."/>
            <person name="Holsappel S."/>
            <person name="Hosono S."/>
            <person name="Hullo M.-F."/>
            <person name="Itaya M."/>
            <person name="Jones L.-M."/>
            <person name="Joris B."/>
            <person name="Karamata D."/>
            <person name="Kasahara Y."/>
            <person name="Klaerr-Blanchard M."/>
            <person name="Klein C."/>
            <person name="Kobayashi Y."/>
            <person name="Koetter P."/>
            <person name="Koningstein G."/>
            <person name="Krogh S."/>
            <person name="Kumano M."/>
            <person name="Kurita K."/>
            <person name="Lapidus A."/>
            <person name="Lardinois S."/>
            <person name="Lauber J."/>
            <person name="Lazarevic V."/>
            <person name="Lee S.-M."/>
            <person name="Levine A."/>
            <person name="Liu H."/>
            <person name="Masuda S."/>
            <person name="Mauel C."/>
            <person name="Medigue C."/>
            <person name="Medina N."/>
            <person name="Mellado R.P."/>
            <person name="Mizuno M."/>
            <person name="Moestl D."/>
            <person name="Nakai S."/>
            <person name="Noback M."/>
            <person name="Noone D."/>
            <person name="O'Reilly M."/>
            <person name="Ogawa K."/>
            <person name="Ogiwara A."/>
            <person name="Oudega B."/>
            <person name="Park S.-H."/>
            <person name="Parro V."/>
            <person name="Pohl T.M."/>
            <person name="Portetelle D."/>
            <person name="Porwollik S."/>
            <person name="Prescott A.M."/>
            <person name="Presecan E."/>
            <person name="Pujic P."/>
            <person name="Purnelle B."/>
            <person name="Rapoport G."/>
            <person name="Rey M."/>
            <person name="Reynolds S."/>
            <person name="Rieger M."/>
            <person name="Rivolta C."/>
            <person name="Rocha E."/>
            <person name="Roche B."/>
            <person name="Rose M."/>
            <person name="Sadaie Y."/>
            <person name="Sato T."/>
            <person name="Scanlan E."/>
            <person name="Schleich S."/>
            <person name="Schroeter R."/>
            <person name="Scoffone F."/>
            <person name="Sekiguchi J."/>
            <person name="Sekowska A."/>
            <person name="Seror S.J."/>
            <person name="Serror P."/>
            <person name="Shin B.-S."/>
            <person name="Soldo B."/>
            <person name="Sorokin A."/>
            <person name="Tacconi E."/>
            <person name="Takagi T."/>
            <person name="Takahashi H."/>
            <person name="Takemaru K."/>
            <person name="Takeuchi M."/>
            <person name="Tamakoshi A."/>
            <person name="Tanaka T."/>
            <person name="Terpstra P."/>
            <person name="Tognoni A."/>
            <person name="Tosato V."/>
            <person name="Uchiyama S."/>
            <person name="Vandenbol M."/>
            <person name="Vannier F."/>
            <person name="Vassarotti A."/>
            <person name="Viari A."/>
            <person name="Wambutt R."/>
            <person name="Wedler E."/>
            <person name="Wedler H."/>
            <person name="Weitzenegger T."/>
            <person name="Winters P."/>
            <person name="Wipat A."/>
            <person name="Yamamoto H."/>
            <person name="Yamane K."/>
            <person name="Yasumoto K."/>
            <person name="Yata K."/>
            <person name="Yoshida K."/>
            <person name="Yoshikawa H.-F."/>
            <person name="Zumstein E."/>
            <person name="Yoshikawa H."/>
            <person name="Danchin A."/>
        </authorList>
    </citation>
    <scope>NUCLEOTIDE SEQUENCE [LARGE SCALE GENOMIC DNA]</scope>
    <source>
        <strain>168</strain>
    </source>
</reference>
<reference key="3">
    <citation type="journal article" date="2005" name="Microbiol. Mol. Biol. Rev.">
        <title>The TetR family of transcriptional repressors.</title>
        <authorList>
            <person name="Ramos J.L."/>
            <person name="Martinez-Bueno M."/>
            <person name="Molina-Henares A.J."/>
            <person name="Teran W."/>
            <person name="Watanabe K."/>
            <person name="Zhang X."/>
            <person name="Gallegos M.T."/>
            <person name="Brennan R."/>
            <person name="Tobes R."/>
        </authorList>
    </citation>
    <scope>REVIEW</scope>
    <scope>GENE FAMILY</scope>
</reference>
<name>YXBF_BACSU</name>
<keyword id="KW-0238">DNA-binding</keyword>
<keyword id="KW-1185">Reference proteome</keyword>
<keyword id="KW-0677">Repeat</keyword>
<keyword id="KW-0678">Repressor</keyword>
<keyword id="KW-0804">Transcription</keyword>
<keyword id="KW-0805">Transcription regulation</keyword>
<evidence type="ECO:0000255" key="1">
    <source>
        <dbReference type="PROSITE-ProRule" id="PRU00335"/>
    </source>
</evidence>
<feature type="chain" id="PRO_0000070656" description="Uncharacterized HTH-type transcriptional regulator YxbF">
    <location>
        <begin position="1"/>
        <end position="380"/>
    </location>
</feature>
<feature type="domain" description="HTH tetR-type 1" evidence="1">
    <location>
        <begin position="3"/>
        <end position="63"/>
    </location>
</feature>
<feature type="domain" description="HTH tetR-type 2" evidence="1">
    <location>
        <begin position="201"/>
        <end position="262"/>
    </location>
</feature>
<feature type="DNA-binding region" description="H-T-H motif" evidence="1">
    <location>
        <begin position="225"/>
        <end position="244"/>
    </location>
</feature>
<accession>P46330</accession>
<sequence length="380" mass="44283">MPESAEAQVKEALLALLKDRDIQHITMKEIAEKAKVSRGSLYLYYEDKFSIIEDVIEDMKEGLGKALFDAFSHMDTLHLNKKRQTVHPTLSFVHEHRSFFSVMMNRGHFHRFFKDVFQQDVLLAPIHVNLTPIERDIYGHYRALYTYAIILYWLNEDAAASPEAISQKVWELVSQKRFYWLFGKAVPGEREKEKQIDRRVVRTREALQKAFLDVLAEKQDYAGITISDITRKSNIRRATFYDHYANKEELLQTMIQRSCAEIIDHLTIASSPNEFSLKEAEKALAILLSALSNMPIVHFLNREWGVPHVIPDMFKALESFYLHQQTDIHAEKKLYAHYVSAMIIGLLLYRLDEGKAHPPEVLAREFLQFLDVKKYKVVLL</sequence>
<organism>
    <name type="scientific">Bacillus subtilis (strain 168)</name>
    <dbReference type="NCBI Taxonomy" id="224308"/>
    <lineage>
        <taxon>Bacteria</taxon>
        <taxon>Bacillati</taxon>
        <taxon>Bacillota</taxon>
        <taxon>Bacilli</taxon>
        <taxon>Bacillales</taxon>
        <taxon>Bacillaceae</taxon>
        <taxon>Bacillus</taxon>
    </lineage>
</organism>
<proteinExistence type="predicted"/>